<feature type="chain" id="PRO_1000016982" description="Ribose-5-phosphate isomerase A">
    <location>
        <begin position="1"/>
        <end position="262"/>
    </location>
</feature>
<feature type="active site" description="Proton acceptor" evidence="1">
    <location>
        <position position="111"/>
    </location>
</feature>
<feature type="binding site" evidence="1">
    <location>
        <begin position="33"/>
        <end position="36"/>
    </location>
    <ligand>
        <name>substrate</name>
    </ligand>
</feature>
<feature type="binding site" evidence="1">
    <location>
        <begin position="89"/>
        <end position="92"/>
    </location>
    <ligand>
        <name>substrate</name>
    </ligand>
</feature>
<feature type="binding site" evidence="1">
    <location>
        <begin position="102"/>
        <end position="105"/>
    </location>
    <ligand>
        <name>substrate</name>
    </ligand>
</feature>
<feature type="binding site" evidence="1">
    <location>
        <position position="129"/>
    </location>
    <ligand>
        <name>substrate</name>
    </ligand>
</feature>
<reference key="1">
    <citation type="journal article" date="2007" name="J. Bacteriol.">
        <title>The complete genome sequence of Roseobacter denitrificans reveals a mixotrophic rather than photosynthetic metabolism.</title>
        <authorList>
            <person name="Swingley W.D."/>
            <person name="Sadekar S."/>
            <person name="Mastrian S.D."/>
            <person name="Matthies H.J."/>
            <person name="Hao J."/>
            <person name="Ramos H."/>
            <person name="Acharya C.R."/>
            <person name="Conrad A.L."/>
            <person name="Taylor H.L."/>
            <person name="Dejesa L.C."/>
            <person name="Shah M.K."/>
            <person name="O'Huallachain M.E."/>
            <person name="Lince M.T."/>
            <person name="Blankenship R.E."/>
            <person name="Beatty J.T."/>
            <person name="Touchman J.W."/>
        </authorList>
    </citation>
    <scope>NUCLEOTIDE SEQUENCE [LARGE SCALE GENOMIC DNA]</scope>
    <source>
        <strain>ATCC 33942 / OCh 114</strain>
    </source>
</reference>
<evidence type="ECO:0000255" key="1">
    <source>
        <dbReference type="HAMAP-Rule" id="MF_00170"/>
    </source>
</evidence>
<protein>
    <recommendedName>
        <fullName evidence="1">Ribose-5-phosphate isomerase A</fullName>
        <ecNumber evidence="1">5.3.1.6</ecNumber>
    </recommendedName>
    <alternativeName>
        <fullName evidence="1">Phosphoriboisomerase A</fullName>
        <shortName evidence="1">PRI</shortName>
    </alternativeName>
</protein>
<accession>Q168R5</accession>
<sequence length="262" mass="27975">MSSELSPIDKAKFVCAKRAAQLVESGMRVGLGTGSTAAWLVRCLGQRVRNEGLQITGVPTSTRTAELAREVGIDIITLDAAKRLDLTIDGADEFDGAFNLIKGGGGALLHEKVVAASSDRMVVIADVGKEVETLGAFPLPIEVIPFGLQTTHALVDETLVSMDVLGRDSSLRMDGDKPFVTDEGNHIIDLHLKRIGDARQLALTLNQVPGVVENGLFIDICDTVVLGFGDGKVEVRDINDGTIASERMIFAETDNLFSDLSD</sequence>
<name>RPIA_ROSDO</name>
<keyword id="KW-0413">Isomerase</keyword>
<keyword id="KW-1185">Reference proteome</keyword>
<proteinExistence type="inferred from homology"/>
<dbReference type="EC" id="5.3.1.6" evidence="1"/>
<dbReference type="EMBL" id="CP000362">
    <property type="protein sequence ID" value="ABG31528.1"/>
    <property type="molecule type" value="Genomic_DNA"/>
</dbReference>
<dbReference type="RefSeq" id="WP_011568145.1">
    <property type="nucleotide sequence ID" value="NC_008209.1"/>
</dbReference>
<dbReference type="SMR" id="Q168R5"/>
<dbReference type="STRING" id="375451.RD1_1918"/>
<dbReference type="KEGG" id="rde:RD1_1918"/>
<dbReference type="eggNOG" id="COG0120">
    <property type="taxonomic scope" value="Bacteria"/>
</dbReference>
<dbReference type="HOGENOM" id="CLU_056590_1_0_5"/>
<dbReference type="OrthoDB" id="5870696at2"/>
<dbReference type="UniPathway" id="UPA00115">
    <property type="reaction ID" value="UER00412"/>
</dbReference>
<dbReference type="Proteomes" id="UP000007029">
    <property type="component" value="Chromosome"/>
</dbReference>
<dbReference type="GO" id="GO:0005829">
    <property type="term" value="C:cytosol"/>
    <property type="evidence" value="ECO:0007669"/>
    <property type="project" value="TreeGrafter"/>
</dbReference>
<dbReference type="GO" id="GO:0004751">
    <property type="term" value="F:ribose-5-phosphate isomerase activity"/>
    <property type="evidence" value="ECO:0007669"/>
    <property type="project" value="UniProtKB-UniRule"/>
</dbReference>
<dbReference type="GO" id="GO:0006014">
    <property type="term" value="P:D-ribose metabolic process"/>
    <property type="evidence" value="ECO:0007669"/>
    <property type="project" value="TreeGrafter"/>
</dbReference>
<dbReference type="GO" id="GO:0009052">
    <property type="term" value="P:pentose-phosphate shunt, non-oxidative branch"/>
    <property type="evidence" value="ECO:0007669"/>
    <property type="project" value="UniProtKB-UniRule"/>
</dbReference>
<dbReference type="CDD" id="cd01398">
    <property type="entry name" value="RPI_A"/>
    <property type="match status" value="1"/>
</dbReference>
<dbReference type="FunFam" id="3.40.50.1360:FF:000001">
    <property type="entry name" value="Ribose-5-phosphate isomerase A"/>
    <property type="match status" value="1"/>
</dbReference>
<dbReference type="Gene3D" id="3.30.70.260">
    <property type="match status" value="1"/>
</dbReference>
<dbReference type="Gene3D" id="3.40.50.1360">
    <property type="match status" value="1"/>
</dbReference>
<dbReference type="HAMAP" id="MF_00170">
    <property type="entry name" value="Rib_5P_isom_A"/>
    <property type="match status" value="1"/>
</dbReference>
<dbReference type="InterPro" id="IPR037171">
    <property type="entry name" value="NagB/RpiA_transferase-like"/>
</dbReference>
<dbReference type="InterPro" id="IPR020672">
    <property type="entry name" value="Ribose5P_isomerase_typA_subgr"/>
</dbReference>
<dbReference type="InterPro" id="IPR004788">
    <property type="entry name" value="Ribose5P_isomerase_type_A"/>
</dbReference>
<dbReference type="NCBIfam" id="NF001924">
    <property type="entry name" value="PRK00702.1"/>
    <property type="match status" value="1"/>
</dbReference>
<dbReference type="NCBIfam" id="TIGR00021">
    <property type="entry name" value="rpiA"/>
    <property type="match status" value="1"/>
</dbReference>
<dbReference type="PANTHER" id="PTHR11934">
    <property type="entry name" value="RIBOSE-5-PHOSPHATE ISOMERASE"/>
    <property type="match status" value="1"/>
</dbReference>
<dbReference type="PANTHER" id="PTHR11934:SF0">
    <property type="entry name" value="RIBOSE-5-PHOSPHATE ISOMERASE"/>
    <property type="match status" value="1"/>
</dbReference>
<dbReference type="Pfam" id="PF06026">
    <property type="entry name" value="Rib_5-P_isom_A"/>
    <property type="match status" value="1"/>
</dbReference>
<dbReference type="SUPFAM" id="SSF75445">
    <property type="entry name" value="D-ribose-5-phosphate isomerase (RpiA), lid domain"/>
    <property type="match status" value="1"/>
</dbReference>
<dbReference type="SUPFAM" id="SSF100950">
    <property type="entry name" value="NagB/RpiA/CoA transferase-like"/>
    <property type="match status" value="1"/>
</dbReference>
<comment type="function">
    <text evidence="1">Catalyzes the reversible conversion of ribose-5-phosphate to ribulose 5-phosphate.</text>
</comment>
<comment type="catalytic activity">
    <reaction evidence="1">
        <text>aldehydo-D-ribose 5-phosphate = D-ribulose 5-phosphate</text>
        <dbReference type="Rhea" id="RHEA:14657"/>
        <dbReference type="ChEBI" id="CHEBI:58121"/>
        <dbReference type="ChEBI" id="CHEBI:58273"/>
        <dbReference type="EC" id="5.3.1.6"/>
    </reaction>
</comment>
<comment type="pathway">
    <text evidence="1">Carbohydrate degradation; pentose phosphate pathway; D-ribose 5-phosphate from D-ribulose 5-phosphate (non-oxidative stage): step 1/1.</text>
</comment>
<comment type="subunit">
    <text evidence="1">Homodimer.</text>
</comment>
<comment type="similarity">
    <text evidence="1">Belongs to the ribose 5-phosphate isomerase family.</text>
</comment>
<gene>
    <name evidence="1" type="primary">rpiA</name>
    <name type="ordered locus">RD1_1918</name>
</gene>
<organism>
    <name type="scientific">Roseobacter denitrificans (strain ATCC 33942 / OCh 114)</name>
    <name type="common">Erythrobacter sp. (strain OCh 114)</name>
    <name type="synonym">Roseobacter denitrificans</name>
    <dbReference type="NCBI Taxonomy" id="375451"/>
    <lineage>
        <taxon>Bacteria</taxon>
        <taxon>Pseudomonadati</taxon>
        <taxon>Pseudomonadota</taxon>
        <taxon>Alphaproteobacteria</taxon>
        <taxon>Rhodobacterales</taxon>
        <taxon>Roseobacteraceae</taxon>
        <taxon>Roseobacter</taxon>
    </lineage>
</organism>